<sequence>MKPKLMYQELKVPAEEPANELPMNEIEAWKAAEKKARWVLLVLILAVVGFGALMTQLFLWEYGDLHLFGPNQRPAPCYDPCEAVLVESIPEGLDFPNASTGNPSTSQAWLGLLAGAHSSLDIASFYWTLTNNDTHTQEPSAQQGEEVLRQLQTLAPKGVNVRIAVSKPNGPQPQTDLQALLQSGAQVRMVDMQKLTHGVLHTKFWVVDQTHFYLGSANMDWRSLTQVKELGVVMYNCSCLARDLTKIFEAYWFLGQAGSSIPSTWPRFYDTRYNQETPMEICLNGTPALAYLASAPPPLCPSGRTPDLKALLNVVDNARSFIYIAVMNYLPTLEFSHPHRFWPAIDDGLRRAAYERGVKVRLLVSCWRHSESSMRAFLLSLAALRDNHTHSDIQVKLFVVPADEAQARIPYARVNHNKYMVTERATYIGTSNWSGNYFTETAGTSLLVMQNGRGSLRSQLEAIFLRDWDSPYSHDLDASADSVGNACRLL</sequence>
<proteinExistence type="evidence at transcript level"/>
<dbReference type="EC" id="3.1.16.1" evidence="3"/>
<dbReference type="EC" id="3.1.4.-" evidence="3"/>
<dbReference type="EMBL" id="AB169661">
    <property type="protein sequence ID" value="BAE01742.1"/>
    <property type="molecule type" value="mRNA"/>
</dbReference>
<dbReference type="SMR" id="Q4R583"/>
<dbReference type="STRING" id="9541.ENSMFAP00000016254"/>
<dbReference type="GlyCosmos" id="Q4R583">
    <property type="glycosylation" value="1 site, No reported glycans"/>
</dbReference>
<dbReference type="eggNOG" id="KOG3603">
    <property type="taxonomic scope" value="Eukaryota"/>
</dbReference>
<dbReference type="Proteomes" id="UP000233100">
    <property type="component" value="Unplaced"/>
</dbReference>
<dbReference type="GO" id="GO:0031901">
    <property type="term" value="C:early endosome membrane"/>
    <property type="evidence" value="ECO:0000250"/>
    <property type="project" value="UniProtKB"/>
</dbReference>
<dbReference type="GO" id="GO:0005789">
    <property type="term" value="C:endoplasmic reticulum membrane"/>
    <property type="evidence" value="ECO:0000250"/>
    <property type="project" value="UniProtKB"/>
</dbReference>
<dbReference type="GO" id="GO:0000139">
    <property type="term" value="C:Golgi membrane"/>
    <property type="evidence" value="ECO:0000250"/>
    <property type="project" value="UniProtKB"/>
</dbReference>
<dbReference type="GO" id="GO:0031902">
    <property type="term" value="C:late endosome membrane"/>
    <property type="evidence" value="ECO:0000250"/>
    <property type="project" value="UniProtKB"/>
</dbReference>
<dbReference type="GO" id="GO:0043202">
    <property type="term" value="C:lysosomal lumen"/>
    <property type="evidence" value="ECO:0000250"/>
    <property type="project" value="UniProtKB"/>
</dbReference>
<dbReference type="GO" id="GO:0046872">
    <property type="term" value="F:metal ion binding"/>
    <property type="evidence" value="ECO:0007669"/>
    <property type="project" value="UniProtKB-KW"/>
</dbReference>
<dbReference type="GO" id="GO:0045145">
    <property type="term" value="F:single-stranded DNA 5'-3' DNA exonuclease activity"/>
    <property type="evidence" value="ECO:0000250"/>
    <property type="project" value="UniProtKB"/>
</dbReference>
<dbReference type="GO" id="GO:0002376">
    <property type="term" value="P:immune system process"/>
    <property type="evidence" value="ECO:0007669"/>
    <property type="project" value="UniProtKB-KW"/>
</dbReference>
<dbReference type="GO" id="GO:0006954">
    <property type="term" value="P:inflammatory response"/>
    <property type="evidence" value="ECO:0007669"/>
    <property type="project" value="UniProtKB-KW"/>
</dbReference>
<dbReference type="GO" id="GO:0006629">
    <property type="term" value="P:lipid metabolic process"/>
    <property type="evidence" value="ECO:0007669"/>
    <property type="project" value="UniProtKB-KW"/>
</dbReference>
<dbReference type="GO" id="GO:0014902">
    <property type="term" value="P:myotube differentiation"/>
    <property type="evidence" value="ECO:0000250"/>
    <property type="project" value="UniProtKB"/>
</dbReference>
<dbReference type="CDD" id="cd09144">
    <property type="entry name" value="PLDc_vPLD3_1"/>
    <property type="match status" value="1"/>
</dbReference>
<dbReference type="FunFam" id="3.30.870.10:FF:000013">
    <property type="entry name" value="phospholipase D3 isoform X1"/>
    <property type="match status" value="1"/>
</dbReference>
<dbReference type="FunFam" id="3.30.870.10:FF:000019">
    <property type="entry name" value="phospholipase D3 isoform X1"/>
    <property type="match status" value="1"/>
</dbReference>
<dbReference type="Gene3D" id="3.30.870.10">
    <property type="entry name" value="Endonuclease Chain A"/>
    <property type="match status" value="2"/>
</dbReference>
<dbReference type="InterPro" id="IPR050874">
    <property type="entry name" value="Diverse_PLD-related"/>
</dbReference>
<dbReference type="InterPro" id="IPR032803">
    <property type="entry name" value="PLDc_3"/>
</dbReference>
<dbReference type="InterPro" id="IPR001736">
    <property type="entry name" value="PLipase_D/transphosphatidylase"/>
</dbReference>
<dbReference type="PANTHER" id="PTHR10185:SF16">
    <property type="entry name" value="5'-3' EXONUCLEASE PLD3"/>
    <property type="match status" value="1"/>
</dbReference>
<dbReference type="PANTHER" id="PTHR10185">
    <property type="entry name" value="PHOSPHOLIPASE D - RELATED"/>
    <property type="match status" value="1"/>
</dbReference>
<dbReference type="Pfam" id="PF13918">
    <property type="entry name" value="PLDc_3"/>
    <property type="match status" value="1"/>
</dbReference>
<dbReference type="SMART" id="SM00155">
    <property type="entry name" value="PLDc"/>
    <property type="match status" value="2"/>
</dbReference>
<dbReference type="SUPFAM" id="SSF56024">
    <property type="entry name" value="Phospholipase D/nuclease"/>
    <property type="match status" value="2"/>
</dbReference>
<dbReference type="PROSITE" id="PS50035">
    <property type="entry name" value="PLD"/>
    <property type="match status" value="2"/>
</dbReference>
<reference key="1">
    <citation type="submission" date="2005-06" db="EMBL/GenBank/DDBJ databases">
        <title>DNA sequences of macaque genes expressed in brain or testis and its evolutionary implications.</title>
        <authorList>
            <consortium name="International consortium for macaque cDNA sequencing and analysis"/>
        </authorList>
    </citation>
    <scope>NUCLEOTIDE SEQUENCE [LARGE SCALE MRNA]</scope>
    <source>
        <tissue>Brain cortex</tissue>
    </source>
</reference>
<comment type="function">
    <text evidence="1 3">5'-&gt;3' exonuclease that hydrolyzes the phosphodiester bond of single-stranded DNA (ssDNA) and RNA molecules to form nucleoside 3'-monophosphates and 5'-end 5'-hydroxy deoxyribonucleotide/ribonucleotide fragments. Partially redundant with PLD4, can cleave all four nucleotides displaying higher efficiency for ssDNA and RNA fragments initiated with uridine and guanosine residues and lower efficiency for cytidine-initiated substrates. As a result, it does not always degrade polynucleotides to the single nucleotide level, it can stall at specific sites sparing certain fragments from exonucleolytic degradation. Processes self and pathogenic ssDNA and RNA molecules that reach the endolysosomal compartment via phagocytosis or autophagy and may serve as 'danger' signals for recognition by innate immune receptors such as toll-like receptors (TLRs). Degrades mitochondrial CpG-rich ssDNA fragments to prevent TLR9 activation and autoinflammatory response, but it can cleave viral RNA to generate ligands for TLR7 activation and initiate antiviral immune responses. In plasmacytoid dendritic cells, it cooperates with endonuclease RNASET2 to release 2',3'-cyclic guanosine monophosphate (2',3'-cGMP), a potent stimulatory ligand for TLR7. Produces 2',3'-cGMPs and cytidine-rich RNA fragments that occupy TLR7 ligand-binding pockets and trigger a signaling-competent state. Can exert polynucleotide phosphatase activity toward 5'-phosphorylated ssDNA substrates although at a slow rate. Transphosphatidylase that catalyzes the exchange with R to S stereo-inversion of the glycerol moiety between (S,R)-lysophosphatidylglycerol (LPG) and monoacylglycerol (MAG) substrates to yield (S,S)-bis(monoacylglycero)phosphate (BMP). Can synthesize a variety of (S,S)-BMPs representing the main phospholipid constituent of lysosomal intralumenal vesicle (ILV) membranes that bind acid hydrolases for lipid degradation. Regulates the homeostasis and interorganellar communication of the endolysosomal system with an overall impact on cellular removal of dysfunctional organelles via autophagy as well as proper protein and lipid turnover. May play a role in myotube formation in response to ER stress.</text>
</comment>
<comment type="catalytic activity">
    <reaction evidence="3">
        <text>Exonucleolytic cleavage in the 5'- to 3'-direction to yield nucleoside 3'-phosphates.</text>
        <dbReference type="EC" id="3.1.16.1"/>
    </reaction>
</comment>
<comment type="catalytic activity">
    <reaction evidence="3">
        <text>a 5'-end 5'-dephospho-ribonucleotidyl-ribonucleotide-RNA + H2O = a ribonucleoside 3'-phosphate + a 5'-end dephospho-ribonucleoside-RNA + H(+)</text>
        <dbReference type="Rhea" id="RHEA:81375"/>
        <dbReference type="Rhea" id="RHEA-COMP:13936"/>
        <dbReference type="Rhea" id="RHEA-COMP:19670"/>
        <dbReference type="ChEBI" id="CHEBI:13197"/>
        <dbReference type="ChEBI" id="CHEBI:15377"/>
        <dbReference type="ChEBI" id="CHEBI:15378"/>
        <dbReference type="ChEBI" id="CHEBI:138284"/>
        <dbReference type="ChEBI" id="CHEBI:231871"/>
    </reaction>
    <physiologicalReaction direction="left-to-right" evidence="3">
        <dbReference type="Rhea" id="RHEA:81376"/>
    </physiologicalReaction>
</comment>
<comment type="catalytic activity">
    <reaction evidence="3">
        <text>a ribonucleoside 3'-phosphate-2'-3'-cyclophospho-GMP + H2O = a ribonucleoside 3'-phosphate + 2',3'-cyclophospho-GMP + H(+)</text>
        <dbReference type="Rhea" id="RHEA:81319"/>
        <dbReference type="ChEBI" id="CHEBI:13197"/>
        <dbReference type="ChEBI" id="CHEBI:15377"/>
        <dbReference type="ChEBI" id="CHEBI:15378"/>
        <dbReference type="ChEBI" id="CHEBI:60837"/>
        <dbReference type="ChEBI" id="CHEBI:231870"/>
    </reaction>
    <physiologicalReaction direction="left-to-right" evidence="3">
        <dbReference type="Rhea" id="RHEA:81320"/>
    </physiologicalReaction>
</comment>
<comment type="catalytic activity">
    <reaction evidence="3">
        <text>a 5'-end 5'-dephospho-2'-deoxyribonucleotidyl-2'-deoxyribonucleotide in single-stranded DNA + H2O = a 5'-end dephospho-2'-deoxyribonucleoside in single-stranded DNA + a 2'-deoxyribonucleoside 3'-phosphate + H(+)</text>
        <dbReference type="Rhea" id="RHEA:81379"/>
        <dbReference type="Rhea" id="RHEA-COMP:19701"/>
        <dbReference type="Rhea" id="RHEA-COMP:19702"/>
        <dbReference type="ChEBI" id="CHEBI:15377"/>
        <dbReference type="ChEBI" id="CHEBI:15378"/>
        <dbReference type="ChEBI" id="CHEBI:131705"/>
        <dbReference type="ChEBI" id="CHEBI:136416"/>
        <dbReference type="ChEBI" id="CHEBI:231873"/>
    </reaction>
    <physiologicalReaction direction="left-to-right" evidence="3">
        <dbReference type="Rhea" id="RHEA:81380"/>
    </physiologicalReaction>
</comment>
<comment type="catalytic activity">
    <reaction evidence="3">
        <text>a 5'-end 5'-phospho-2'-deoxyribonucleotide in single-stranded DNA + H2O = a 5'-end 5'-dephospho-2'-deoxyribonucleotide in single-stranded DNA + phosphate</text>
        <dbReference type="Rhea" id="RHEA:82335"/>
        <dbReference type="Rhea" id="RHEA-COMP:19868"/>
        <dbReference type="Rhea" id="RHEA-COMP:19869"/>
        <dbReference type="ChEBI" id="CHEBI:15377"/>
        <dbReference type="ChEBI" id="CHEBI:43474"/>
        <dbReference type="ChEBI" id="CHEBI:136412"/>
        <dbReference type="ChEBI" id="CHEBI:136416"/>
    </reaction>
    <physiologicalReaction direction="left-to-right" evidence="3">
        <dbReference type="Rhea" id="RHEA:82336"/>
    </physiologicalReaction>
</comment>
<comment type="catalytic activity">
    <reaction evidence="3">
        <text>a 3-lyso-sn-glycero-1-phospho-(3'-acyl-1'-sn-glycerol) + a 1-acyl-sn-glycerol = a 3-acyl-sn-glycero-1-phospho-(3'-acyl-1'-sn-glycerol) + glycerol</text>
        <dbReference type="Rhea" id="RHEA:82563"/>
        <dbReference type="ChEBI" id="CHEBI:17754"/>
        <dbReference type="ChEBI" id="CHEBI:64683"/>
        <dbReference type="ChEBI" id="CHEBI:77717"/>
        <dbReference type="ChEBI" id="CHEBI:232393"/>
    </reaction>
    <physiologicalReaction direction="left-to-right" evidence="3">
        <dbReference type="Rhea" id="RHEA:82564"/>
    </physiologicalReaction>
</comment>
<comment type="catalytic activity">
    <reaction evidence="3">
        <text>3-lyso-sn-glycero-1-phospho-(3'-(9Z-octadecenoyl)-1'-sn-glycerol) + 1-(9Z-octadecenoyl)-sn-glycerol = 3-(9Z-octadecenoyl)-sn-glycero-1-phospho-(3'-(9Z-octadecenoyl)-1'-sn-glycerol) + glycerol</text>
        <dbReference type="Rhea" id="RHEA:82567"/>
        <dbReference type="ChEBI" id="CHEBI:17754"/>
        <dbReference type="ChEBI" id="CHEBI:75757"/>
        <dbReference type="ChEBI" id="CHEBI:139150"/>
        <dbReference type="ChEBI" id="CHEBI:232394"/>
    </reaction>
    <physiologicalReaction direction="left-to-right" evidence="3">
        <dbReference type="Rhea" id="RHEA:82568"/>
    </physiologicalReaction>
</comment>
<comment type="subunit">
    <text evidence="3">Homodimer. Interacts with APP.</text>
</comment>
<comment type="subcellular location">
    <subcellularLocation>
        <location evidence="3">Endoplasmic reticulum membrane</location>
        <topology evidence="3">Single-pass type II membrane protein</topology>
    </subcellularLocation>
    <subcellularLocation>
        <location evidence="3">Lysosome lumen</location>
    </subcellularLocation>
    <subcellularLocation>
        <location evidence="3">Early endosome membrane</location>
        <topology evidence="3">Single-pass type II membrane protein</topology>
    </subcellularLocation>
    <subcellularLocation>
        <location evidence="3">Late endosome membrane</location>
        <topology evidence="3">Single-pass type II membrane protein</topology>
    </subcellularLocation>
    <subcellularLocation>
        <location evidence="3">Golgi apparatus membrane</location>
        <topology evidence="3">Single-pass type II membrane protein</topology>
    </subcellularLocation>
    <subcellularLocation>
        <location evidence="3">Endosome membrane</location>
        <topology evidence="3">Single-pass type II membrane protein</topology>
    </subcellularLocation>
    <text evidence="3">Localizes to ER-associated vesicles in differentiating myotubes. Sorted into intralumenal vesicles (ILVs) in lysosomes. The soluble form in lysosome arises by proteolytic processing of the membrane-bound form. Colocalizes with APP in endosomes.</text>
</comment>
<comment type="domain">
    <text evidence="3">The catalytic domain contains two conserved PLD phosphodiesterase HxK(x4)D(E) motifs that accomodate the phosphate group of the nucleic acid substrates, with one nucleophile histidine residue forming a phosphohistidine intermediate and the other histidine protonating the leaving 5'-OH ssDNA/RNA fragment, resulting in the cleavage of the phosphodiester bond. The homodimer has two independent catalytic domains arranged at the dimer interface.</text>
</comment>
<comment type="PTM">
    <text evidence="3">N-glycosylated.</text>
</comment>
<comment type="PTM">
    <text evidence="3">Proteolytically processed to a soluble form that is stable within endosomes and lysosomes. During transport through the secretory pathway becomes proteolysed by cysteine proteases, thereby releasing a stable soluble lysosomal lumenal polypeptide, whereas the transmembrane-bound fragment is rapidly degraded. Its transport route to lysosomes involves ubiquitination and the ESCRT complex.</text>
</comment>
<comment type="PTM">
    <text evidence="3">Ubiquitinated. Ubiquitination mediates sorting into lysosomes.</text>
</comment>
<comment type="similarity">
    <text evidence="5">Belongs to the phospholipase D family.</text>
</comment>
<comment type="caution">
    <text evidence="1 2">It was initially thought that PDL3 has phospholipase D activity due to its HKD motifs. The second HKD motif contains Glu instead of the canonical Asp. Its enzyme activity is therefore unsure. Catalytic phospholipase D activity is still controversial (By similarity). Its closest homolog PLD4, exhibits no phospholipase activity (By similarity).</text>
</comment>
<evidence type="ECO:0000250" key="1">
    <source>
        <dbReference type="UniProtKB" id="O35405"/>
    </source>
</evidence>
<evidence type="ECO:0000250" key="2">
    <source>
        <dbReference type="UniProtKB" id="Q8BG07"/>
    </source>
</evidence>
<evidence type="ECO:0000250" key="3">
    <source>
        <dbReference type="UniProtKB" id="Q8IV08"/>
    </source>
</evidence>
<evidence type="ECO:0000255" key="4">
    <source>
        <dbReference type="PROSITE-ProRule" id="PRU00153"/>
    </source>
</evidence>
<evidence type="ECO:0000305" key="5"/>
<gene>
    <name type="primary">PLD3</name>
    <name type="ORF">QccE-15167</name>
</gene>
<protein>
    <recommendedName>
        <fullName>5'-3' exonuclease PLD3</fullName>
        <ecNumber evidence="3">3.1.16.1</ecNumber>
    </recommendedName>
    <alternativeName>
        <fullName>(S,S)-bis(monoacylglycero)phosphate synthase PLD3</fullName>
        <ecNumber evidence="3">3.1.4.-</ecNumber>
    </alternativeName>
    <alternativeName>
        <fullName>Phospholipase D3</fullName>
    </alternativeName>
</protein>
<name>PLD3_MACFA</name>
<accession>Q4R583</accession>
<feature type="chain" id="PRO_0000280327" description="5'-3' exonuclease PLD3">
    <location>
        <begin position="1"/>
        <end position="490"/>
    </location>
</feature>
<feature type="topological domain" description="Cytoplasmic" evidence="3">
    <location>
        <begin position="1"/>
        <end position="38"/>
    </location>
</feature>
<feature type="transmembrane region" description="Helical; Signal-anchor for type II membrane protein" evidence="3">
    <location>
        <begin position="39"/>
        <end position="59"/>
    </location>
</feature>
<feature type="topological domain" description="Lumenal" evidence="3">
    <location>
        <begin position="60"/>
        <end position="490"/>
    </location>
</feature>
<feature type="domain" description="PLD phosphodiesterase 1" evidence="4">
    <location>
        <begin position="196"/>
        <end position="223"/>
    </location>
</feature>
<feature type="domain" description="PLD phosphodiesterase 2" evidence="4">
    <location>
        <begin position="411"/>
        <end position="437"/>
    </location>
</feature>
<feature type="active site" evidence="4">
    <location>
        <position position="201"/>
    </location>
</feature>
<feature type="active site" description="Proton donor" evidence="4">
    <location>
        <position position="201"/>
    </location>
</feature>
<feature type="active site" evidence="4">
    <location>
        <position position="203"/>
    </location>
</feature>
<feature type="active site" evidence="4">
    <location>
        <position position="208"/>
    </location>
</feature>
<feature type="active site" description="Nucleophile" evidence="1">
    <location>
        <position position="416"/>
    </location>
</feature>
<feature type="binding site" evidence="1">
    <location>
        <position position="201"/>
    </location>
    <ligand>
        <name>phosphate</name>
        <dbReference type="ChEBI" id="CHEBI:43474"/>
    </ligand>
    <ligandPart>
        <name>5'-phosphate 2'-deoxynucleoside residue</name>
        <dbReference type="ChEBI" id="CHEBI:136412"/>
    </ligandPart>
</feature>
<feature type="binding site" evidence="1">
    <location>
        <position position="203"/>
    </location>
    <ligand>
        <name>phosphate</name>
        <dbReference type="ChEBI" id="CHEBI:43474"/>
    </ligand>
    <ligandPart>
        <name>5'-phosphate 2'-deoxynucleoside residue</name>
        <dbReference type="ChEBI" id="CHEBI:136412"/>
    </ligandPart>
</feature>
<feature type="binding site" evidence="1">
    <location>
        <position position="218"/>
    </location>
    <ligand>
        <name>phosphate</name>
        <dbReference type="ChEBI" id="CHEBI:43474"/>
    </ligand>
    <ligandPart>
        <name>5'-phosphate 2'-deoxynucleoside residue</name>
        <dbReference type="ChEBI" id="CHEBI:136412"/>
    </ligandPart>
</feature>
<feature type="binding site" evidence="1">
    <location>
        <position position="416"/>
    </location>
    <ligand>
        <name>phosphate</name>
        <dbReference type="ChEBI" id="CHEBI:43474"/>
    </ligand>
    <ligandPart>
        <name>5'-phosphate 2'-deoxynucleoside residue</name>
        <dbReference type="ChEBI" id="CHEBI:136412"/>
    </ligandPart>
</feature>
<feature type="binding site" evidence="3">
    <location>
        <position position="438"/>
    </location>
    <ligand>
        <name>Mg(2+)</name>
        <dbReference type="ChEBI" id="CHEBI:18420"/>
    </ligand>
</feature>
<feature type="site" description="Cleavage; by lysosomal cysteine proteases" evidence="3">
    <location>
        <begin position="71"/>
        <end position="72"/>
    </location>
</feature>
<feature type="glycosylation site" description="N-linked (GlcNAc...) asparagine" evidence="3">
    <location>
        <position position="97"/>
    </location>
</feature>
<feature type="glycosylation site" description="N-linked (GlcNAc...) asparagine" evidence="3">
    <location>
        <position position="132"/>
    </location>
</feature>
<feature type="glycosylation site" description="N-linked (GlcNAc...) asparagine" evidence="3">
    <location>
        <position position="236"/>
    </location>
</feature>
<feature type="glycosylation site" description="N-linked (GlcNAc...) asparagine" evidence="3">
    <location>
        <position position="284"/>
    </location>
</feature>
<feature type="glycosylation site" description="N-linked (GlcNAc...) asparagine" evidence="3">
    <location>
        <position position="387"/>
    </location>
</feature>
<feature type="disulfide bond" evidence="1">
    <location>
        <begin position="77"/>
        <end position="239"/>
    </location>
</feature>
<feature type="disulfide bond" evidence="1">
    <location>
        <begin position="81"/>
        <end position="237"/>
    </location>
</feature>
<feature type="disulfide bond" evidence="1">
    <location>
        <begin position="366"/>
        <end position="487"/>
    </location>
</feature>
<keyword id="KW-1015">Disulfide bond</keyword>
<keyword id="KW-0256">Endoplasmic reticulum</keyword>
<keyword id="KW-0967">Endosome</keyword>
<keyword id="KW-0269">Exonuclease</keyword>
<keyword id="KW-0325">Glycoprotein</keyword>
<keyword id="KW-0333">Golgi apparatus</keyword>
<keyword id="KW-0378">Hydrolase</keyword>
<keyword id="KW-0391">Immunity</keyword>
<keyword id="KW-0395">Inflammatory response</keyword>
<keyword id="KW-0443">Lipid metabolism</keyword>
<keyword id="KW-0458">Lysosome</keyword>
<keyword id="KW-0460">Magnesium</keyword>
<keyword id="KW-0472">Membrane</keyword>
<keyword id="KW-0479">Metal-binding</keyword>
<keyword id="KW-0540">Nuclease</keyword>
<keyword id="KW-1208">Phospholipid metabolism</keyword>
<keyword id="KW-1185">Reference proteome</keyword>
<keyword id="KW-0677">Repeat</keyword>
<keyword id="KW-0735">Signal-anchor</keyword>
<keyword id="KW-0812">Transmembrane</keyword>
<keyword id="KW-1133">Transmembrane helix</keyword>
<keyword id="KW-0832">Ubl conjugation</keyword>
<organism>
    <name type="scientific">Macaca fascicularis</name>
    <name type="common">Crab-eating macaque</name>
    <name type="synonym">Cynomolgus monkey</name>
    <dbReference type="NCBI Taxonomy" id="9541"/>
    <lineage>
        <taxon>Eukaryota</taxon>
        <taxon>Metazoa</taxon>
        <taxon>Chordata</taxon>
        <taxon>Craniata</taxon>
        <taxon>Vertebrata</taxon>
        <taxon>Euteleostomi</taxon>
        <taxon>Mammalia</taxon>
        <taxon>Eutheria</taxon>
        <taxon>Euarchontoglires</taxon>
        <taxon>Primates</taxon>
        <taxon>Haplorrhini</taxon>
        <taxon>Catarrhini</taxon>
        <taxon>Cercopithecidae</taxon>
        <taxon>Cercopithecinae</taxon>
        <taxon>Macaca</taxon>
    </lineage>
</organism>